<organism>
    <name type="scientific">Yersinia pestis bv. Antiqua (strain Antiqua)</name>
    <dbReference type="NCBI Taxonomy" id="360102"/>
    <lineage>
        <taxon>Bacteria</taxon>
        <taxon>Pseudomonadati</taxon>
        <taxon>Pseudomonadota</taxon>
        <taxon>Gammaproteobacteria</taxon>
        <taxon>Enterobacterales</taxon>
        <taxon>Yersiniaceae</taxon>
        <taxon>Yersinia</taxon>
    </lineage>
</organism>
<dbReference type="EC" id="7.5.2.12" evidence="1"/>
<dbReference type="EMBL" id="CP000308">
    <property type="protein sequence ID" value="ABG13582.1"/>
    <property type="molecule type" value="Genomic_DNA"/>
</dbReference>
<dbReference type="RefSeq" id="WP_002210588.1">
    <property type="nucleotide sequence ID" value="NZ_CP009906.1"/>
</dbReference>
<dbReference type="SMR" id="Q1C7J0"/>
<dbReference type="GeneID" id="57976414"/>
<dbReference type="KEGG" id="ypa:YPA_1616"/>
<dbReference type="Proteomes" id="UP000001971">
    <property type="component" value="Chromosome"/>
</dbReference>
<dbReference type="GO" id="GO:0005886">
    <property type="term" value="C:plasma membrane"/>
    <property type="evidence" value="ECO:0007669"/>
    <property type="project" value="UniProtKB-SubCell"/>
</dbReference>
<dbReference type="GO" id="GO:0015612">
    <property type="term" value="F:ABC-type L-arabinose transporter activity"/>
    <property type="evidence" value="ECO:0007669"/>
    <property type="project" value="UniProtKB-EC"/>
</dbReference>
<dbReference type="GO" id="GO:0005524">
    <property type="term" value="F:ATP binding"/>
    <property type="evidence" value="ECO:0007669"/>
    <property type="project" value="UniProtKB-KW"/>
</dbReference>
<dbReference type="GO" id="GO:0016887">
    <property type="term" value="F:ATP hydrolysis activity"/>
    <property type="evidence" value="ECO:0007669"/>
    <property type="project" value="InterPro"/>
</dbReference>
<dbReference type="CDD" id="cd03216">
    <property type="entry name" value="ABC_Carb_Monos_I"/>
    <property type="match status" value="1"/>
</dbReference>
<dbReference type="CDD" id="cd03215">
    <property type="entry name" value="ABC_Carb_Monos_II"/>
    <property type="match status" value="1"/>
</dbReference>
<dbReference type="FunFam" id="3.40.50.300:FF:000126">
    <property type="entry name" value="Galactose/methyl galactoside import ATP-binding protein MglA"/>
    <property type="match status" value="1"/>
</dbReference>
<dbReference type="FunFam" id="3.40.50.300:FF:000127">
    <property type="entry name" value="Ribose import ATP-binding protein RbsA"/>
    <property type="match status" value="1"/>
</dbReference>
<dbReference type="Gene3D" id="3.40.50.300">
    <property type="entry name" value="P-loop containing nucleotide triphosphate hydrolases"/>
    <property type="match status" value="2"/>
</dbReference>
<dbReference type="InterPro" id="IPR003593">
    <property type="entry name" value="AAA+_ATPase"/>
</dbReference>
<dbReference type="InterPro" id="IPR050107">
    <property type="entry name" value="ABC_carbohydrate_import_ATPase"/>
</dbReference>
<dbReference type="InterPro" id="IPR003439">
    <property type="entry name" value="ABC_transporter-like_ATP-bd"/>
</dbReference>
<dbReference type="InterPro" id="IPR017871">
    <property type="entry name" value="ABC_transporter-like_CS"/>
</dbReference>
<dbReference type="InterPro" id="IPR027417">
    <property type="entry name" value="P-loop_NTPase"/>
</dbReference>
<dbReference type="NCBIfam" id="NF008442">
    <property type="entry name" value="PRK11288.1"/>
    <property type="match status" value="1"/>
</dbReference>
<dbReference type="PANTHER" id="PTHR43790:SF6">
    <property type="entry name" value="ARABINOSE IMPORT ATP-BINDING PROTEIN ARAG"/>
    <property type="match status" value="1"/>
</dbReference>
<dbReference type="PANTHER" id="PTHR43790">
    <property type="entry name" value="CARBOHYDRATE TRANSPORT ATP-BINDING PROTEIN MG119-RELATED"/>
    <property type="match status" value="1"/>
</dbReference>
<dbReference type="Pfam" id="PF00005">
    <property type="entry name" value="ABC_tran"/>
    <property type="match status" value="2"/>
</dbReference>
<dbReference type="SMART" id="SM00382">
    <property type="entry name" value="AAA"/>
    <property type="match status" value="2"/>
</dbReference>
<dbReference type="SUPFAM" id="SSF52540">
    <property type="entry name" value="P-loop containing nucleoside triphosphate hydrolases"/>
    <property type="match status" value="2"/>
</dbReference>
<dbReference type="PROSITE" id="PS00211">
    <property type="entry name" value="ABC_TRANSPORTER_1"/>
    <property type="match status" value="1"/>
</dbReference>
<dbReference type="PROSITE" id="PS50893">
    <property type="entry name" value="ABC_TRANSPORTER_2"/>
    <property type="match status" value="2"/>
</dbReference>
<dbReference type="PROSITE" id="PS51268">
    <property type="entry name" value="ARAG"/>
    <property type="match status" value="1"/>
</dbReference>
<keyword id="KW-0067">ATP-binding</keyword>
<keyword id="KW-0997">Cell inner membrane</keyword>
<keyword id="KW-1003">Cell membrane</keyword>
<keyword id="KW-0472">Membrane</keyword>
<keyword id="KW-0547">Nucleotide-binding</keyword>
<keyword id="KW-0677">Repeat</keyword>
<keyword id="KW-0762">Sugar transport</keyword>
<keyword id="KW-1278">Translocase</keyword>
<keyword id="KW-0813">Transport</keyword>
<evidence type="ECO:0000255" key="1">
    <source>
        <dbReference type="HAMAP-Rule" id="MF_01721"/>
    </source>
</evidence>
<accession>Q1C7J0</accession>
<gene>
    <name evidence="1" type="primary">araG</name>
    <name type="ordered locus">YPA_1616</name>
</gene>
<proteinExistence type="inferred from homology"/>
<comment type="function">
    <text evidence="1">Part of the ABC transporter complex AraFGH involved in arabinose import. Responsible for energy coupling to the transport system.</text>
</comment>
<comment type="catalytic activity">
    <reaction evidence="1">
        <text>L-arabinose(out) + ATP + H2O = L-arabinose(in) + ADP + phosphate + H(+)</text>
        <dbReference type="Rhea" id="RHEA:30007"/>
        <dbReference type="ChEBI" id="CHEBI:15377"/>
        <dbReference type="ChEBI" id="CHEBI:15378"/>
        <dbReference type="ChEBI" id="CHEBI:17535"/>
        <dbReference type="ChEBI" id="CHEBI:30616"/>
        <dbReference type="ChEBI" id="CHEBI:43474"/>
        <dbReference type="ChEBI" id="CHEBI:456216"/>
        <dbReference type="EC" id="7.5.2.12"/>
    </reaction>
</comment>
<comment type="subunit">
    <text evidence="1">The complex is composed of two ATP-binding proteins (AraG), two transmembrane proteins (AraH) and a solute-binding protein (AraF).</text>
</comment>
<comment type="subcellular location">
    <subcellularLocation>
        <location evidence="1">Cell inner membrane</location>
        <topology evidence="1">Peripheral membrane protein</topology>
    </subcellularLocation>
</comment>
<comment type="similarity">
    <text evidence="1">Belongs to the ABC transporter superfamily. Arabinose importer (TC 3.A.1.2.2) family.</text>
</comment>
<name>ARAG_YERPA</name>
<protein>
    <recommendedName>
        <fullName evidence="1">Arabinose import ATP-binding protein AraG</fullName>
        <ecNumber evidence="1">7.5.2.12</ecNumber>
    </recommendedName>
</protein>
<reference key="1">
    <citation type="journal article" date="2006" name="J. Bacteriol.">
        <title>Complete genome sequence of Yersinia pestis strains Antiqua and Nepal516: evidence of gene reduction in an emerging pathogen.</title>
        <authorList>
            <person name="Chain P.S.G."/>
            <person name="Hu P."/>
            <person name="Malfatti S.A."/>
            <person name="Radnedge L."/>
            <person name="Larimer F."/>
            <person name="Vergez L.M."/>
            <person name="Worsham P."/>
            <person name="Chu M.C."/>
            <person name="Andersen G.L."/>
        </authorList>
    </citation>
    <scope>NUCLEOTIDE SEQUENCE [LARGE SCALE GENOMIC DNA]</scope>
    <source>
        <strain>Antiqua</strain>
    </source>
</reference>
<feature type="chain" id="PRO_0000270484" description="Arabinose import ATP-binding protein AraG">
    <location>
        <begin position="1"/>
        <end position="523"/>
    </location>
</feature>
<feature type="domain" description="ABC transporter 1" evidence="1">
    <location>
        <begin position="20"/>
        <end position="255"/>
    </location>
</feature>
<feature type="domain" description="ABC transporter 2" evidence="1">
    <location>
        <begin position="268"/>
        <end position="511"/>
    </location>
</feature>
<feature type="binding site" evidence="1">
    <location>
        <begin position="52"/>
        <end position="59"/>
    </location>
    <ligand>
        <name>ATP</name>
        <dbReference type="ChEBI" id="CHEBI:30616"/>
    </ligand>
</feature>
<sequence length="523" mass="56873">MSAPHSALQAELDAAQSPYLAFRGIGKSFPGVLALDDISFTCQAGQIHALMGENGAGKSTLLKILSGNYTPTQGEIHIKGKAVNFTNTTDALDAGVAIIYQELHLVPEMTVAENIYLGQLPTKMGMVDRKLLRYESRIQLSHLGLDIDPDTPLKYLSIGQWQMVEIAKALARNAKIIAFDEPTSSLSAREIEQLFRVIRELRAEGRVILYVSHRMEEIFALSDAITVFKDGRYVRTFDDMTQVNNASLVQAMVGRNLGDIYGYQPREIGSERLTLQAVKAIGVASPISLTVHQGEIVGLFGLVGAGRSELLKGLFGDTKLTSGKLLLDGQPLTIRSPIDAISAGIMLCPEDRKADGIIPVHSVQDNINISARRKTLTAGCLINNRWEADNALLRIQSLNIKTPGPQQLIMNLSGGNQQKAILGRWLSEDMKVILLDEPTRGIDVGAKHEIYNVIYQLAKQGIAVLFASSDLPEVLGLADRIVVMREGAISGELDHEYATEEQALSLAMLRTPNIATNTASAVA</sequence>